<protein>
    <recommendedName>
        <fullName>UPF0598 protein C8orf82 homolog</fullName>
    </recommendedName>
</protein>
<accession>A8E4L3</accession>
<feature type="chain" id="PRO_0000340668" description="UPF0598 protein C8orf82 homolog">
    <location>
        <begin position="1"/>
        <end position="218"/>
    </location>
</feature>
<sequence length="218" mass="24262">MWAMSGALRPWALILARSPGARTYAGGGGVSYTQGQSPEPRTREYFYYVDHQGQLFLDDSRMKNFTTCFKDPQFLVMFFSRLRPNRSGRYEAYFPFLSLCGRERNFLRCEDRPVVFTHLLAAGPAPQRLSYCGGGEALAVPFEPARLLPLATNGRLYHPAPERAGGVGLVRSALAFELSACFEYAPGAPELPSHVRWQGRRFALTMDLAPLLLAAPPP</sequence>
<comment type="similarity">
    <text evidence="1">Belongs to the UPF0598 family.</text>
</comment>
<proteinExistence type="evidence at transcript level"/>
<name>CH082_BOVIN</name>
<keyword id="KW-1185">Reference proteome</keyword>
<evidence type="ECO:0000305" key="1"/>
<organism>
    <name type="scientific">Bos taurus</name>
    <name type="common">Bovine</name>
    <dbReference type="NCBI Taxonomy" id="9913"/>
    <lineage>
        <taxon>Eukaryota</taxon>
        <taxon>Metazoa</taxon>
        <taxon>Chordata</taxon>
        <taxon>Craniata</taxon>
        <taxon>Vertebrata</taxon>
        <taxon>Euteleostomi</taxon>
        <taxon>Mammalia</taxon>
        <taxon>Eutheria</taxon>
        <taxon>Laurasiatheria</taxon>
        <taxon>Artiodactyla</taxon>
        <taxon>Ruminantia</taxon>
        <taxon>Pecora</taxon>
        <taxon>Bovidae</taxon>
        <taxon>Bovinae</taxon>
        <taxon>Bos</taxon>
    </lineage>
</organism>
<reference key="1">
    <citation type="submission" date="2007-03" db="EMBL/GenBank/DDBJ databases">
        <authorList>
            <consortium name="NIH - Mammalian Gene Collection (MGC) project"/>
        </authorList>
    </citation>
    <scope>NUCLEOTIDE SEQUENCE [LARGE SCALE MRNA]</scope>
    <source>
        <strain>Hereford</strain>
        <tissue>Fetal liver</tissue>
    </source>
</reference>
<dbReference type="EMBL" id="BC134700">
    <property type="protein sequence ID" value="AAI34701.1"/>
    <property type="molecule type" value="mRNA"/>
</dbReference>
<dbReference type="RefSeq" id="NP_001103654.1">
    <property type="nucleotide sequence ID" value="NM_001110184.1"/>
</dbReference>
<dbReference type="FunCoup" id="A8E4L3">
    <property type="interactions" value="224"/>
</dbReference>
<dbReference type="STRING" id="9913.ENSBTAP00000006544"/>
<dbReference type="PaxDb" id="9913-ENSBTAP00000006544"/>
<dbReference type="GeneID" id="618766"/>
<dbReference type="KEGG" id="bta:618766"/>
<dbReference type="CTD" id="618766"/>
<dbReference type="eggNOG" id="ENOG502R8EE">
    <property type="taxonomic scope" value="Eukaryota"/>
</dbReference>
<dbReference type="HOGENOM" id="CLU_069446_2_0_1"/>
<dbReference type="InParanoid" id="A8E4L3"/>
<dbReference type="OrthoDB" id="10260024at2759"/>
<dbReference type="TreeFam" id="TF323959"/>
<dbReference type="Proteomes" id="UP000009136">
    <property type="component" value="Unplaced"/>
</dbReference>
<dbReference type="InterPro" id="IPR028108">
    <property type="entry name" value="DUF4505"/>
</dbReference>
<dbReference type="PANTHER" id="PTHR31449">
    <property type="entry name" value="UPF0598 PROTEIN C8ORF82"/>
    <property type="match status" value="1"/>
</dbReference>
<dbReference type="PANTHER" id="PTHR31449:SF3">
    <property type="entry name" value="UPF0598 PROTEIN C8ORF82"/>
    <property type="match status" value="1"/>
</dbReference>
<dbReference type="Pfam" id="PF14956">
    <property type="entry name" value="DUF4505"/>
    <property type="match status" value="1"/>
</dbReference>